<reference key="1">
    <citation type="journal article" date="2005" name="J. Infect. Dis.">
        <title>Genome sequence of a serotype M28 strain of group A Streptococcus: potential new insights into puerperal sepsis and bacterial disease specificity.</title>
        <authorList>
            <person name="Green N.M."/>
            <person name="Zhang S."/>
            <person name="Porcella S.F."/>
            <person name="Nagiec M.J."/>
            <person name="Barbian K.D."/>
            <person name="Beres S.B."/>
            <person name="Lefebvre R.B."/>
            <person name="Musser J.M."/>
        </authorList>
    </citation>
    <scope>NUCLEOTIDE SEQUENCE [LARGE SCALE GENOMIC DNA]</scope>
    <source>
        <strain>MGAS6180</strain>
    </source>
</reference>
<protein>
    <recommendedName>
        <fullName evidence="1">Holo-[acyl-carrier-protein] synthase</fullName>
        <shortName evidence="1">Holo-ACP synthase</shortName>
        <ecNumber evidence="1">2.7.8.7</ecNumber>
    </recommendedName>
    <alternativeName>
        <fullName evidence="1">4'-phosphopantetheinyl transferase AcpS</fullName>
    </alternativeName>
</protein>
<keyword id="KW-0963">Cytoplasm</keyword>
<keyword id="KW-0275">Fatty acid biosynthesis</keyword>
<keyword id="KW-0276">Fatty acid metabolism</keyword>
<keyword id="KW-0444">Lipid biosynthesis</keyword>
<keyword id="KW-0443">Lipid metabolism</keyword>
<keyword id="KW-0460">Magnesium</keyword>
<keyword id="KW-0479">Metal-binding</keyword>
<keyword id="KW-0808">Transferase</keyword>
<comment type="function">
    <text evidence="1">Transfers the 4'-phosphopantetheine moiety from coenzyme A to a Ser of acyl-carrier-protein.</text>
</comment>
<comment type="catalytic activity">
    <reaction evidence="1">
        <text>apo-[ACP] + CoA = holo-[ACP] + adenosine 3',5'-bisphosphate + H(+)</text>
        <dbReference type="Rhea" id="RHEA:12068"/>
        <dbReference type="Rhea" id="RHEA-COMP:9685"/>
        <dbReference type="Rhea" id="RHEA-COMP:9690"/>
        <dbReference type="ChEBI" id="CHEBI:15378"/>
        <dbReference type="ChEBI" id="CHEBI:29999"/>
        <dbReference type="ChEBI" id="CHEBI:57287"/>
        <dbReference type="ChEBI" id="CHEBI:58343"/>
        <dbReference type="ChEBI" id="CHEBI:64479"/>
        <dbReference type="EC" id="2.7.8.7"/>
    </reaction>
</comment>
<comment type="cofactor">
    <cofactor evidence="1">
        <name>Mg(2+)</name>
        <dbReference type="ChEBI" id="CHEBI:18420"/>
    </cofactor>
</comment>
<comment type="subcellular location">
    <subcellularLocation>
        <location evidence="1">Cytoplasm</location>
    </subcellularLocation>
</comment>
<comment type="similarity">
    <text evidence="1">Belongs to the P-Pant transferase superfamily. AcpS family.</text>
</comment>
<dbReference type="EC" id="2.7.8.7" evidence="1"/>
<dbReference type="EMBL" id="CP000056">
    <property type="protein sequence ID" value="AAX72633.1"/>
    <property type="molecule type" value="Genomic_DNA"/>
</dbReference>
<dbReference type="RefSeq" id="WP_011285113.1">
    <property type="nucleotide sequence ID" value="NC_007296.2"/>
</dbReference>
<dbReference type="SMR" id="Q48RM7"/>
<dbReference type="KEGG" id="spb:M28_Spy1523"/>
<dbReference type="HOGENOM" id="CLU_089696_1_2_9"/>
<dbReference type="GO" id="GO:0005737">
    <property type="term" value="C:cytoplasm"/>
    <property type="evidence" value="ECO:0007669"/>
    <property type="project" value="UniProtKB-SubCell"/>
</dbReference>
<dbReference type="GO" id="GO:0008897">
    <property type="term" value="F:holo-[acyl-carrier-protein] synthase activity"/>
    <property type="evidence" value="ECO:0007669"/>
    <property type="project" value="UniProtKB-UniRule"/>
</dbReference>
<dbReference type="GO" id="GO:0000287">
    <property type="term" value="F:magnesium ion binding"/>
    <property type="evidence" value="ECO:0007669"/>
    <property type="project" value="UniProtKB-UniRule"/>
</dbReference>
<dbReference type="GO" id="GO:0006633">
    <property type="term" value="P:fatty acid biosynthetic process"/>
    <property type="evidence" value="ECO:0007669"/>
    <property type="project" value="UniProtKB-UniRule"/>
</dbReference>
<dbReference type="Gene3D" id="3.90.470.20">
    <property type="entry name" value="4'-phosphopantetheinyl transferase domain"/>
    <property type="match status" value="1"/>
</dbReference>
<dbReference type="HAMAP" id="MF_00101">
    <property type="entry name" value="AcpS"/>
    <property type="match status" value="1"/>
</dbReference>
<dbReference type="InterPro" id="IPR008278">
    <property type="entry name" value="4-PPantetheinyl_Trfase_dom"/>
</dbReference>
<dbReference type="InterPro" id="IPR037143">
    <property type="entry name" value="4-PPantetheinyl_Trfase_dom_sf"/>
</dbReference>
<dbReference type="InterPro" id="IPR002582">
    <property type="entry name" value="ACPS"/>
</dbReference>
<dbReference type="InterPro" id="IPR004568">
    <property type="entry name" value="Ppantetheine-prot_Trfase_dom"/>
</dbReference>
<dbReference type="NCBIfam" id="TIGR00516">
    <property type="entry name" value="acpS"/>
    <property type="match status" value="1"/>
</dbReference>
<dbReference type="NCBIfam" id="TIGR00556">
    <property type="entry name" value="pantethn_trn"/>
    <property type="match status" value="1"/>
</dbReference>
<dbReference type="Pfam" id="PF01648">
    <property type="entry name" value="ACPS"/>
    <property type="match status" value="1"/>
</dbReference>
<dbReference type="SUPFAM" id="SSF56214">
    <property type="entry name" value="4'-phosphopantetheinyl transferase"/>
    <property type="match status" value="1"/>
</dbReference>
<accession>Q48RM7</accession>
<feature type="chain" id="PRO_0000228311" description="Holo-[acyl-carrier-protein] synthase">
    <location>
        <begin position="1"/>
        <end position="118"/>
    </location>
</feature>
<feature type="binding site" evidence="1">
    <location>
        <position position="8"/>
    </location>
    <ligand>
        <name>Mg(2+)</name>
        <dbReference type="ChEBI" id="CHEBI:18420"/>
    </ligand>
</feature>
<feature type="binding site" evidence="1">
    <location>
        <position position="58"/>
    </location>
    <ligand>
        <name>Mg(2+)</name>
        <dbReference type="ChEBI" id="CHEBI:18420"/>
    </ligand>
</feature>
<proteinExistence type="inferred from homology"/>
<name>ACPS_STRPM</name>
<organism>
    <name type="scientific">Streptococcus pyogenes serotype M28 (strain MGAS6180)</name>
    <dbReference type="NCBI Taxonomy" id="319701"/>
    <lineage>
        <taxon>Bacteria</taxon>
        <taxon>Bacillati</taxon>
        <taxon>Bacillota</taxon>
        <taxon>Bacilli</taxon>
        <taxon>Lactobacillales</taxon>
        <taxon>Streptococcaceae</taxon>
        <taxon>Streptococcus</taxon>
    </lineage>
</organism>
<evidence type="ECO:0000255" key="1">
    <source>
        <dbReference type="HAMAP-Rule" id="MF_00101"/>
    </source>
</evidence>
<sequence length="118" mass="13246">MIVGHGIDLQEISAIEKVYQRNPRFAQKILTEQELAIFESFPYKRRLSYLAGRWAGKEAFAKAIGTGIGRLTFQDIEILNDVRGCPILTKSPFKGNSFISISHSGNYVQASVILEDKK</sequence>
<gene>
    <name evidence="1" type="primary">acpS</name>
    <name type="ordered locus">M28_Spy1523</name>
</gene>